<reference evidence="10" key="1">
    <citation type="journal article" date="2006" name="Vet. Immunol. Immunopathol.">
        <title>Expression of TOLL-like receptors (TLR) by bovine antigen-presenting cells-potential role in pathogen discrimination?</title>
        <authorList>
            <person name="Werling D."/>
            <person name="Piercy J."/>
            <person name="Coffey T.J."/>
        </authorList>
    </citation>
    <scope>NUCLEOTIDE SEQUENCE [MRNA]</scope>
</reference>
<reference evidence="9 11" key="2">
    <citation type="journal article" date="2008" name="Genomics">
        <title>Analysis of sequence variability and protein domain architectures for bovine peptidoglycan recognition protein 1 and Toll-like receptors 2 and 6.</title>
        <authorList>
            <person name="Seabury C.M."/>
            <person name="Womack J.E."/>
        </authorList>
    </citation>
    <scope>NUCLEOTIDE SEQUENCE [GENOMIC DNA]</scope>
    <scope>VARIANT ASN-214</scope>
    <source>
        <strain evidence="11">Angus</strain>
        <strain evidence="12">Charolais</strain>
        <strain evidence="13">Holstein</strain>
        <strain evidence="14">Limousin</strain>
    </source>
</reference>
<reference evidence="16" key="3">
    <citation type="submission" date="2004-01" db="EMBL/GenBank/DDBJ databases">
        <title>Structure and tissue-specific expression the bovine TLR6-encoding gene.</title>
        <authorList>
            <person name="Yang W."/>
            <person name="Weikard R."/>
            <person name="Zerbe H."/>
            <person name="Seyfert H.M."/>
        </authorList>
    </citation>
    <scope>NUCLEOTIDE SEQUENCE [GENOMIC DNA / MRNA]</scope>
    <source>
        <tissue evidence="15">Mammary gland</tissue>
    </source>
</reference>
<reference evidence="9 17" key="4">
    <citation type="journal article" date="2006" name="Gene">
        <title>Genomic organization and transcript profiling of the bovine toll-like receptor gene cluster TLR6-TLR1-TLR10.</title>
        <authorList>
            <person name="Opsal M.A."/>
            <person name="Vage D.I."/>
            <person name="Hayes B."/>
            <person name="Berget I."/>
            <person name="Lien S."/>
        </authorList>
    </citation>
    <scope>NUCLEOTIDE SEQUENCE [MRNA] OF 165-422</scope>
    <scope>TISSUE SPECIFICITY</scope>
    <scope>VARIANT ASN-214</scope>
    <source>
        <tissue evidence="7">Semen</tissue>
    </source>
</reference>
<protein>
    <recommendedName>
        <fullName evidence="16">Toll-like receptor 6</fullName>
    </recommendedName>
    <cdAntigenName evidence="4">CD286</cdAntigenName>
</protein>
<feature type="signal peptide" evidence="5">
    <location>
        <begin position="1"/>
        <end position="23"/>
    </location>
</feature>
<feature type="chain" id="PRO_0000394670" description="Toll-like receptor 6" evidence="5">
    <location>
        <begin position="24"/>
        <end position="793"/>
    </location>
</feature>
<feature type="topological domain" description="Extracellular" evidence="5">
    <location>
        <begin position="24"/>
        <end position="584"/>
    </location>
</feature>
<feature type="transmembrane region" description="Helical" evidence="5">
    <location>
        <begin position="585"/>
        <end position="605"/>
    </location>
</feature>
<feature type="topological domain" description="Cytoplasmic" evidence="5">
    <location>
        <begin position="606"/>
        <end position="793"/>
    </location>
</feature>
<feature type="repeat" description="LRR 1">
    <location>
        <begin position="54"/>
        <end position="77"/>
    </location>
</feature>
<feature type="repeat" description="LRR 2">
    <location>
        <begin position="78"/>
        <end position="101"/>
    </location>
</feature>
<feature type="repeat" description="LRR 3">
    <location>
        <begin position="102"/>
        <end position="122"/>
    </location>
</feature>
<feature type="repeat" description="LRR 4">
    <location>
        <begin position="123"/>
        <end position="147"/>
    </location>
</feature>
<feature type="repeat" description="LRR 5">
    <location>
        <begin position="148"/>
        <end position="168"/>
    </location>
</feature>
<feature type="repeat" description="LRR 6">
    <location>
        <begin position="169"/>
        <end position="196"/>
    </location>
</feature>
<feature type="repeat" description="LRR 7">
    <location>
        <begin position="197"/>
        <end position="219"/>
    </location>
</feature>
<feature type="repeat" description="LRR 8">
    <location>
        <begin position="220"/>
        <end position="250"/>
    </location>
</feature>
<feature type="repeat" description="LRR 9">
    <location>
        <begin position="251"/>
        <end position="277"/>
    </location>
</feature>
<feature type="repeat" description="LRR 10">
    <location>
        <begin position="278"/>
        <end position="303"/>
    </location>
</feature>
<feature type="repeat" description="LRR 11">
    <location>
        <begin position="304"/>
        <end position="330"/>
    </location>
</feature>
<feature type="repeat" description="LRR 12">
    <location>
        <begin position="331"/>
        <end position="354"/>
    </location>
</feature>
<feature type="repeat" description="LRR 13">
    <location>
        <begin position="355"/>
        <end position="378"/>
    </location>
</feature>
<feature type="repeat" description="LRR 14">
    <location>
        <begin position="379"/>
        <end position="404"/>
    </location>
</feature>
<feature type="repeat" description="LRR 15">
    <location>
        <begin position="405"/>
        <end position="428"/>
    </location>
</feature>
<feature type="repeat" description="LRR 16">
    <location>
        <begin position="429"/>
        <end position="449"/>
    </location>
</feature>
<feature type="repeat" description="LRR 17">
    <location>
        <begin position="450"/>
        <end position="473"/>
    </location>
</feature>
<feature type="repeat" description="LRR 18">
    <location>
        <begin position="474"/>
        <end position="495"/>
    </location>
</feature>
<feature type="repeat" description="LRR 19">
    <location>
        <begin position="496"/>
        <end position="519"/>
    </location>
</feature>
<feature type="domain" description="LRRCT">
    <location>
        <begin position="520"/>
        <end position="575"/>
    </location>
</feature>
<feature type="domain" description="TIR" evidence="6">
    <location>
        <begin position="640"/>
        <end position="781"/>
    </location>
</feature>
<feature type="glycosylation site" description="N-linked (GlcNAc...) asparagine" evidence="5">
    <location>
        <position position="63"/>
    </location>
</feature>
<feature type="glycosylation site" description="N-linked (GlcNAc...) asparagine" evidence="5">
    <location>
        <position position="145"/>
    </location>
</feature>
<feature type="glycosylation site" description="N-linked (GlcNAc...) asparagine" evidence="5">
    <location>
        <position position="253"/>
    </location>
</feature>
<feature type="glycosylation site" description="N-linked (GlcNAc...) asparagine" evidence="5">
    <location>
        <position position="285"/>
    </location>
</feature>
<feature type="glycosylation site" description="N-linked (GlcNAc...) asparagine" evidence="5">
    <location>
        <position position="359"/>
    </location>
</feature>
<feature type="glycosylation site" description="N-linked (GlcNAc...) asparagine" evidence="5">
    <location>
        <position position="423"/>
    </location>
</feature>
<feature type="glycosylation site" description="N-linked (GlcNAc...) asparagine" evidence="5">
    <location>
        <position position="434"/>
    </location>
</feature>
<feature type="disulfide bond" evidence="1">
    <location>
        <begin position="117"/>
        <end position="140"/>
    </location>
</feature>
<feature type="disulfide bond" evidence="1">
    <location>
        <begin position="235"/>
        <end position="265"/>
    </location>
</feature>
<feature type="disulfide bond" evidence="1">
    <location>
        <begin position="348"/>
        <end position="373"/>
    </location>
</feature>
<feature type="disulfide bond" evidence="1">
    <location>
        <begin position="424"/>
        <end position="447"/>
    </location>
</feature>
<feature type="sequence variant" description="In strain: Angus, Charolais, Holstein and Limousin." evidence="7 8">
    <original>D</original>
    <variation>N</variation>
    <location>
        <position position="214"/>
    </location>
</feature>
<feature type="sequence conflict" description="In Ref. 1; CAF02015/AAY40896." evidence="9" ref="1">
    <original>G</original>
    <variation>A</variation>
    <location>
        <position position="221"/>
    </location>
</feature>
<feature type="sequence conflict" description="In Ref. 2; ACH92795/ACH92799/ACH92800/ACH92798 and 4; CAJ35083." evidence="9" ref="2 4">
    <original>V</original>
    <variation>M</variation>
    <location>
        <position position="259"/>
    </location>
</feature>
<feature type="sequence conflict" description="In Ref. 2; ACH92795/ACH92799/ACH92800/ACH92798." evidence="9" ref="2">
    <original>EH</original>
    <variation>DY</variation>
    <location>
        <begin position="503"/>
        <end position="504"/>
    </location>
</feature>
<name>TLR6_BOVIN</name>
<comment type="function">
    <text evidence="3 4">Participates in the innate immune response to Gram-positive bacteria and fungi. Specifically recognizes diacylated and, to a lesser extent, triacylated lipopeptides. In response to diacylated lipopeptides, forms the activation cluster TLR2:TLR6:CD14:CD36, this cluster triggers signaling from the cell surface and subsequently is targeted to the Golgi in a lipid-raft dependent pathway. Acts via MYD88 and TRAF6, leading to NF-kappa-B activation, cytokine secretion and the inflammatory response. Recognizes mycoplasmal macrophage-activating lipopeptide-2kD (MALP-2), soluble tuberculosis factor (STF), phenol-soluble modulin (PSM) and B.burgdorferi outer surface protein A lipoprotein (OspA-L) cooperatively with TLR2. In complex with TLR4, promotes sterile inflammation in monocytes/macrophages in response to oxidized low-density lipoprotein (oxLDL) or amyloid-beta 42. In this context, the initial signal is provided by oxLDL- or amyloid-beta 42-binding to CD36. This event induces the formation of a heterodimer of TLR4 and TLR6, which is rapidly internalized and triggers inflammatory response, leading to the NF-kappa-B-dependent production of CXCL1, CXCL2 and CCL9 cytokines, via MYD88 signaling pathway, and CCL5 cytokine, via TICAM1 signaling pathway, as well as IL1B secretion.</text>
</comment>
<comment type="subunit">
    <text evidence="3 4">Homodimer (via cytoplasmic TIR domain) (By similarity). Heterodimer with TLR2 via their respective extracellular domains. Binds MYD88 via their respective TIR domains (By similarity). Interacts with CD36, following CD36 stimulation by oxLDL or amyloid-beta 42, and forms a heterodimer with TLR4. The trimeric complex is internalized and triggers inflammatory response. LYN kinase activity facilitates TLR4-TLR6 heterodimerization and signal initiation (By similarity). The heterodimer TLR2:TLR6 interacts with CD14 and CD36 in response to triacylated lipopeptides.</text>
</comment>
<comment type="subcellular location">
    <subcellularLocation>
        <location evidence="4">Cell membrane</location>
        <topology evidence="5">Single-pass type I membrane protein</topology>
    </subcellularLocation>
    <subcellularLocation>
        <location evidence="3">Cytoplasmic vesicle</location>
        <location evidence="3">Phagosome membrane</location>
        <topology evidence="5">Single-pass type I membrane protein</topology>
    </subcellularLocation>
    <subcellularLocation>
        <location evidence="4">Membrane raft</location>
    </subcellularLocation>
    <subcellularLocation>
        <location evidence="4">Golgi apparatus</location>
    </subcellularLocation>
    <text evidence="4">Upon complex formation with CD36 and TLR4, internalized through dynamin-dependent endocytosis. Does not reside in lipid rafts before stimulation but accumulates increasingly in the raft upon the presence of the microbial ligand. In response to diacylated lipoproteins, TLR2:TLR6 heterodimers are recruited in lipid rafts, this recruitment determine the intracellular targeting to the Golgi apparatus.</text>
</comment>
<comment type="tissue specificity">
    <text evidence="7">Highest expression levels seen in blood and lymph node, intermediate expression seen in spleen and lowest expression seen in the liver, lung and udder cistern.</text>
</comment>
<comment type="similarity">
    <text evidence="5">Belongs to the Toll-like receptor family.</text>
</comment>
<comment type="caution">
    <text evidence="2 9">In some plant proteins and in human SARM1, the TIR domain has NAD(+) hydrolase (NADase) activity (By similarity). However, despite the presence of the catalytic Asp residue, the isolated TIR domain of human TLR4 lacks NADase activity (By similarity). Based on this, it is unlikely that Toll-like receptors have NADase activity.</text>
</comment>
<comment type="sequence caution" evidence="9">
    <conflict type="frameshift">
        <sequence resource="EMBL-CDS" id="CAJ35083"/>
    </conflict>
</comment>
<sequence length="793" mass="90927">MIKDKESPIRSCHFVYIVALVFGTIIQFSDESEFVVDMSKTSLIHVPKDLPPKTKVLDLSQNNISELHLSDISFLSGLRVLRLSHNRIQGLDISIFKFNHDLEYLDLSHNQLQKISCHPITTTLKHLDLSFNDFDALPICKEFGNLTQLNFLGLSATKLQQLDLLPIAHLHLSCILLDLEDYMKENKKESLQILNTKKLHLVFHPNSFFSVQVDISANSLGCLQLTNIKLNDYNCQVLLKFLSGLTGGPTLLNFTLNHVETTWKCLVKVFQFLWPKPIEYLNIYNLTIVESIDEEVFTYYKTTLKALKIEHITNKVFIFSQTALYTVFSEMNILMLTISDTRFIHMLCPQEPSTFKFLNFTQNSFTDSVFQNCDTLARLETLILQKNELKDLFKTSLMTKDMLSLETLDVSWNSLEYDRSNGNCSWVGSIVVLNLSSNALTDSVFRCLPPRIKVLDLHNNRIRSIPKDVTGLETLQELNLASNSLAHLPGCGIFSSLSILIIEHNSISNPSADFFQSCQKIRSLKAGNNPFQCSCELRDFIQSVGQVSSDVVEGWPESYKCDYPESYKGTPLKDFQVSELSCNTALLIITIVVPGLVLAVAVTVLCIYLDLPWYLRMVCQWTQTRRRARNVPLEELQRTLQFHAFISYSEHDSAWVKNELIPNLEKEDIRICLHERNFVAGKSIVENIINCIEKSYKSIFVLSPNFVQSEWCHYELYFAHHNLFHEGSDNLILILLDPIPQYSIPSSYHKLRALMAQRTYLEWPKEKSKHGLFWANLRASINIKLMEKAAEIH</sequence>
<proteinExistence type="evidence at transcript level"/>
<accession>Q704V6</accession>
<accession>B5T272</accession>
<accession>B5T275</accession>
<accession>B5T276</accession>
<accession>Q3BK20</accession>
<accession>Q706D2</accession>
<keyword id="KW-1003">Cell membrane</keyword>
<keyword id="KW-0968">Cytoplasmic vesicle</keyword>
<keyword id="KW-1015">Disulfide bond</keyword>
<keyword id="KW-0325">Glycoprotein</keyword>
<keyword id="KW-0333">Golgi apparatus</keyword>
<keyword id="KW-0391">Immunity</keyword>
<keyword id="KW-0395">Inflammatory response</keyword>
<keyword id="KW-0399">Innate immunity</keyword>
<keyword id="KW-0433">Leucine-rich repeat</keyword>
<keyword id="KW-0472">Membrane</keyword>
<keyword id="KW-0520">NAD</keyword>
<keyword id="KW-0675">Receptor</keyword>
<keyword id="KW-1185">Reference proteome</keyword>
<keyword id="KW-0677">Repeat</keyword>
<keyword id="KW-0732">Signal</keyword>
<keyword id="KW-0812">Transmembrane</keyword>
<keyword id="KW-1133">Transmembrane helix</keyword>
<gene>
    <name evidence="16" type="primary">TLR6</name>
</gene>
<organism>
    <name type="scientific">Bos taurus</name>
    <name type="common">Bovine</name>
    <dbReference type="NCBI Taxonomy" id="9913"/>
    <lineage>
        <taxon>Eukaryota</taxon>
        <taxon>Metazoa</taxon>
        <taxon>Chordata</taxon>
        <taxon>Craniata</taxon>
        <taxon>Vertebrata</taxon>
        <taxon>Euteleostomi</taxon>
        <taxon>Mammalia</taxon>
        <taxon>Eutheria</taxon>
        <taxon>Laurasiatheria</taxon>
        <taxon>Artiodactyla</taxon>
        <taxon>Ruminantia</taxon>
        <taxon>Pecora</taxon>
        <taxon>Bovidae</taxon>
        <taxon>Bovinae</taxon>
        <taxon>Bos</taxon>
    </lineage>
</organism>
<evidence type="ECO:0000250" key="1"/>
<evidence type="ECO:0000250" key="2">
    <source>
        <dbReference type="UniProtKB" id="O00206"/>
    </source>
</evidence>
<evidence type="ECO:0000250" key="3">
    <source>
        <dbReference type="UniProtKB" id="Q9EPW9"/>
    </source>
</evidence>
<evidence type="ECO:0000250" key="4">
    <source>
        <dbReference type="UniProtKB" id="Q9Y2C9"/>
    </source>
</evidence>
<evidence type="ECO:0000255" key="5"/>
<evidence type="ECO:0000255" key="6">
    <source>
        <dbReference type="PROSITE-ProRule" id="PRU00204"/>
    </source>
</evidence>
<evidence type="ECO:0000269" key="7">
    <source>
    </source>
</evidence>
<evidence type="ECO:0000269" key="8">
    <source>
    </source>
</evidence>
<evidence type="ECO:0000305" key="9"/>
<evidence type="ECO:0000312" key="10">
    <source>
        <dbReference type="EMBL" id="AAY40896.1"/>
    </source>
</evidence>
<evidence type="ECO:0000312" key="11">
    <source>
        <dbReference type="EMBL" id="ACH92795.1"/>
    </source>
</evidence>
<evidence type="ECO:0000312" key="12">
    <source>
        <dbReference type="EMBL" id="ACH92798.1"/>
    </source>
</evidence>
<evidence type="ECO:0000312" key="13">
    <source>
        <dbReference type="EMBL" id="ACH92799.1"/>
    </source>
</evidence>
<evidence type="ECO:0000312" key="14">
    <source>
        <dbReference type="EMBL" id="ACH92800.1"/>
    </source>
</evidence>
<evidence type="ECO:0000312" key="15">
    <source>
        <dbReference type="EMBL" id="CAF02015.1"/>
    </source>
</evidence>
<evidence type="ECO:0000312" key="16">
    <source>
        <dbReference type="EMBL" id="CAF06197.1"/>
    </source>
</evidence>
<evidence type="ECO:0000312" key="17">
    <source>
        <dbReference type="EMBL" id="CAJ35083.1"/>
    </source>
</evidence>
<dbReference type="EMBL" id="AY487803">
    <property type="protein sequence ID" value="AAY40896.1"/>
    <property type="molecule type" value="mRNA"/>
</dbReference>
<dbReference type="EMBL" id="EU746466">
    <property type="protein sequence ID" value="ACH92795.1"/>
    <property type="molecule type" value="Genomic_DNA"/>
</dbReference>
<dbReference type="EMBL" id="EU746469">
    <property type="protein sequence ID" value="ACH92798.1"/>
    <property type="molecule type" value="Genomic_DNA"/>
</dbReference>
<dbReference type="EMBL" id="EU746470">
    <property type="protein sequence ID" value="ACH92799.1"/>
    <property type="molecule type" value="Genomic_DNA"/>
</dbReference>
<dbReference type="EMBL" id="EU746471">
    <property type="protein sequence ID" value="ACH92800.1"/>
    <property type="molecule type" value="Genomic_DNA"/>
</dbReference>
<dbReference type="EMBL" id="AJ618974">
    <property type="protein sequence ID" value="CAF02015.1"/>
    <property type="molecule type" value="mRNA"/>
</dbReference>
<dbReference type="EMBL" id="AJ620670">
    <property type="protein sequence ID" value="CAF06197.1"/>
    <property type="molecule type" value="Genomic_DNA"/>
</dbReference>
<dbReference type="EMBL" id="AM113851">
    <property type="protein sequence ID" value="CAJ35083.1"/>
    <property type="status" value="ALT_FRAME"/>
    <property type="molecule type" value="mRNA"/>
</dbReference>
<dbReference type="RefSeq" id="NP_001001159.1">
    <property type="nucleotide sequence ID" value="NM_001001159.1"/>
</dbReference>
<dbReference type="SMR" id="Q704V6"/>
<dbReference type="FunCoup" id="Q704V6">
    <property type="interactions" value="495"/>
</dbReference>
<dbReference type="STRING" id="9913.ENSBTAP00000035880"/>
<dbReference type="GlyCosmos" id="Q704V6">
    <property type="glycosylation" value="7 sites, No reported glycans"/>
</dbReference>
<dbReference type="GlyGen" id="Q704V6">
    <property type="glycosylation" value="7 sites"/>
</dbReference>
<dbReference type="PaxDb" id="9913-ENSBTAP00000035880"/>
<dbReference type="GeneID" id="407237"/>
<dbReference type="KEGG" id="bta:407237"/>
<dbReference type="CTD" id="10333"/>
<dbReference type="eggNOG" id="KOG4641">
    <property type="taxonomic scope" value="Eukaryota"/>
</dbReference>
<dbReference type="InParanoid" id="Q704V6"/>
<dbReference type="OrthoDB" id="1081807at2759"/>
<dbReference type="Proteomes" id="UP000009136">
    <property type="component" value="Unplaced"/>
</dbReference>
<dbReference type="GO" id="GO:0005794">
    <property type="term" value="C:Golgi apparatus"/>
    <property type="evidence" value="ECO:0000250"/>
    <property type="project" value="UniProtKB"/>
</dbReference>
<dbReference type="GO" id="GO:0045121">
    <property type="term" value="C:membrane raft"/>
    <property type="evidence" value="ECO:0000250"/>
    <property type="project" value="UniProtKB"/>
</dbReference>
<dbReference type="GO" id="GO:0030670">
    <property type="term" value="C:phagocytic vesicle membrane"/>
    <property type="evidence" value="ECO:0007669"/>
    <property type="project" value="UniProtKB-SubCell"/>
</dbReference>
<dbReference type="GO" id="GO:0005886">
    <property type="term" value="C:plasma membrane"/>
    <property type="evidence" value="ECO:0000318"/>
    <property type="project" value="GO_Central"/>
</dbReference>
<dbReference type="GO" id="GO:0035355">
    <property type="term" value="C:Toll-like receptor 2-Toll-like receptor 6 protein complex"/>
    <property type="evidence" value="ECO:0000318"/>
    <property type="project" value="GO_Central"/>
</dbReference>
<dbReference type="GO" id="GO:0042802">
    <property type="term" value="F:identical protein binding"/>
    <property type="evidence" value="ECO:0000250"/>
    <property type="project" value="UniProtKB"/>
</dbReference>
<dbReference type="GO" id="GO:0071723">
    <property type="term" value="F:lipopeptide binding"/>
    <property type="evidence" value="ECO:0000318"/>
    <property type="project" value="GO_Central"/>
</dbReference>
<dbReference type="GO" id="GO:0061809">
    <property type="term" value="F:NAD+ nucleosidase activity, cyclic ADP-ribose generating"/>
    <property type="evidence" value="ECO:0007669"/>
    <property type="project" value="UniProtKB-EC"/>
</dbReference>
<dbReference type="GO" id="GO:0038023">
    <property type="term" value="F:signaling receptor activity"/>
    <property type="evidence" value="ECO:0000318"/>
    <property type="project" value="GO_Central"/>
</dbReference>
<dbReference type="GO" id="GO:0035663">
    <property type="term" value="F:Toll-like receptor 2 binding"/>
    <property type="evidence" value="ECO:0000318"/>
    <property type="project" value="GO_Central"/>
</dbReference>
<dbReference type="GO" id="GO:0004888">
    <property type="term" value="F:transmembrane signaling receptor activity"/>
    <property type="evidence" value="ECO:0007669"/>
    <property type="project" value="InterPro"/>
</dbReference>
<dbReference type="GO" id="GO:0071726">
    <property type="term" value="P:cellular response to diacyl bacterial lipopeptide"/>
    <property type="evidence" value="ECO:0000250"/>
    <property type="project" value="UniProtKB"/>
</dbReference>
<dbReference type="GO" id="GO:0006954">
    <property type="term" value="P:inflammatory response"/>
    <property type="evidence" value="ECO:0000318"/>
    <property type="project" value="GO_Central"/>
</dbReference>
<dbReference type="GO" id="GO:0045087">
    <property type="term" value="P:innate immune response"/>
    <property type="evidence" value="ECO:0007669"/>
    <property type="project" value="UniProtKB-KW"/>
</dbReference>
<dbReference type="GO" id="GO:0032731">
    <property type="term" value="P:positive regulation of interleukin-1 beta production"/>
    <property type="evidence" value="ECO:0000250"/>
    <property type="project" value="UniProtKB"/>
</dbReference>
<dbReference type="GO" id="GO:1900227">
    <property type="term" value="P:positive regulation of NLRP3 inflammasome complex assembly"/>
    <property type="evidence" value="ECO:0000250"/>
    <property type="project" value="UniProtKB"/>
</dbReference>
<dbReference type="GO" id="GO:0002224">
    <property type="term" value="P:toll-like receptor signaling pathway"/>
    <property type="evidence" value="ECO:0000318"/>
    <property type="project" value="GO_Central"/>
</dbReference>
<dbReference type="FunFam" id="3.40.50.10140:FF:000001">
    <property type="entry name" value="Toll-like receptor 2"/>
    <property type="match status" value="1"/>
</dbReference>
<dbReference type="FunFam" id="3.80.10.10:FF:000046">
    <property type="entry name" value="Toll-like receptor 2"/>
    <property type="match status" value="1"/>
</dbReference>
<dbReference type="Gene3D" id="3.80.10.10">
    <property type="entry name" value="Ribonuclease Inhibitor"/>
    <property type="match status" value="1"/>
</dbReference>
<dbReference type="Gene3D" id="3.40.50.10140">
    <property type="entry name" value="Toll/interleukin-1 receptor homology (TIR) domain"/>
    <property type="match status" value="1"/>
</dbReference>
<dbReference type="InterPro" id="IPR000483">
    <property type="entry name" value="Cys-rich_flank_reg_C"/>
</dbReference>
<dbReference type="InterPro" id="IPR001611">
    <property type="entry name" value="Leu-rich_rpt"/>
</dbReference>
<dbReference type="InterPro" id="IPR003591">
    <property type="entry name" value="Leu-rich_rpt_typical-subtyp"/>
</dbReference>
<dbReference type="InterPro" id="IPR032675">
    <property type="entry name" value="LRR_dom_sf"/>
</dbReference>
<dbReference type="InterPro" id="IPR000157">
    <property type="entry name" value="TIR_dom"/>
</dbReference>
<dbReference type="InterPro" id="IPR017241">
    <property type="entry name" value="Toll-like_receptor"/>
</dbReference>
<dbReference type="InterPro" id="IPR035897">
    <property type="entry name" value="Toll_tir_struct_dom_sf"/>
</dbReference>
<dbReference type="PANTHER" id="PTHR24365">
    <property type="entry name" value="TOLL-LIKE RECEPTOR"/>
    <property type="match status" value="1"/>
</dbReference>
<dbReference type="PANTHER" id="PTHR24365:SF422">
    <property type="entry name" value="TOLL-LIKE RECEPTOR 6"/>
    <property type="match status" value="1"/>
</dbReference>
<dbReference type="Pfam" id="PF13855">
    <property type="entry name" value="LRR_8"/>
    <property type="match status" value="1"/>
</dbReference>
<dbReference type="Pfam" id="PF01463">
    <property type="entry name" value="LRRCT"/>
    <property type="match status" value="1"/>
</dbReference>
<dbReference type="Pfam" id="PF01582">
    <property type="entry name" value="TIR"/>
    <property type="match status" value="1"/>
</dbReference>
<dbReference type="PIRSF" id="PIRSF037595">
    <property type="entry name" value="Toll-like_receptor"/>
    <property type="match status" value="1"/>
</dbReference>
<dbReference type="PRINTS" id="PR01537">
    <property type="entry name" value="INTRLKN1R1F"/>
</dbReference>
<dbReference type="PRINTS" id="PR00019">
    <property type="entry name" value="LEURICHRPT"/>
</dbReference>
<dbReference type="SMART" id="SM00369">
    <property type="entry name" value="LRR_TYP"/>
    <property type="match status" value="5"/>
</dbReference>
<dbReference type="SMART" id="SM00082">
    <property type="entry name" value="LRRCT"/>
    <property type="match status" value="1"/>
</dbReference>
<dbReference type="SMART" id="SM00255">
    <property type="entry name" value="TIR"/>
    <property type="match status" value="1"/>
</dbReference>
<dbReference type="SUPFAM" id="SSF52058">
    <property type="entry name" value="L domain-like"/>
    <property type="match status" value="1"/>
</dbReference>
<dbReference type="SUPFAM" id="SSF52075">
    <property type="entry name" value="Outer arm dynein light chain 1"/>
    <property type="match status" value="1"/>
</dbReference>
<dbReference type="SUPFAM" id="SSF52200">
    <property type="entry name" value="Toll/Interleukin receptor TIR domain"/>
    <property type="match status" value="1"/>
</dbReference>
<dbReference type="PROSITE" id="PS51450">
    <property type="entry name" value="LRR"/>
    <property type="match status" value="10"/>
</dbReference>
<dbReference type="PROSITE" id="PS50104">
    <property type="entry name" value="TIR"/>
    <property type="match status" value="1"/>
</dbReference>